<protein>
    <recommendedName>
        <fullName evidence="1">4-hydroxy-tetrahydrodipicolinate synthase</fullName>
        <shortName evidence="1">HTPA synthase</shortName>
        <ecNumber evidence="1">4.3.3.7</ecNumber>
    </recommendedName>
</protein>
<accession>Q4FLS1</accession>
<keyword id="KW-0028">Amino-acid biosynthesis</keyword>
<keyword id="KW-0963">Cytoplasm</keyword>
<keyword id="KW-0220">Diaminopimelate biosynthesis</keyword>
<keyword id="KW-0456">Lyase</keyword>
<keyword id="KW-0457">Lysine biosynthesis</keyword>
<keyword id="KW-1185">Reference proteome</keyword>
<keyword id="KW-0704">Schiff base</keyword>
<sequence length="293" mass="31783">MFKGSNVALITPFKNNELDVEAYIKLIHFQISNGTNGLVPAGTTGESPTLSHDEHQKVIDLCVKESNGKNIVIAGTGSNSTKEAISLTTHAEKAGADAALIVTPYYNKPTQEGLYQHYKAINDKCGIPIIIYNIPGRSVIDMSVDTMARLFELKNIVGVKDATGDLDRVNQQKDKMGTDFVQLTGNDDNALEFNNRGGVGSISVTANIAPKLCSDFQKASKIENNESKLEAIRLDKILQPIHSSMFIESNPSPVKYAAKLLGLCDDEVRLPLVKVTDPTKDIVKEALVSANLL</sequence>
<gene>
    <name evidence="1" type="primary">dapA</name>
    <name type="ordered locus">SAR11_1062</name>
</gene>
<evidence type="ECO:0000255" key="1">
    <source>
        <dbReference type="HAMAP-Rule" id="MF_00418"/>
    </source>
</evidence>
<evidence type="ECO:0000305" key="2"/>
<name>DAPA_PELUB</name>
<reference key="1">
    <citation type="journal article" date="2005" name="Science">
        <title>Genome streamlining in a cosmopolitan oceanic bacterium.</title>
        <authorList>
            <person name="Giovannoni S.J."/>
            <person name="Tripp H.J."/>
            <person name="Givan S."/>
            <person name="Podar M."/>
            <person name="Vergin K.L."/>
            <person name="Baptista D."/>
            <person name="Bibbs L."/>
            <person name="Eads J."/>
            <person name="Richardson T.H."/>
            <person name="Noordewier M."/>
            <person name="Rappe M.S."/>
            <person name="Short J.M."/>
            <person name="Carrington J.C."/>
            <person name="Mathur E.J."/>
        </authorList>
    </citation>
    <scope>NUCLEOTIDE SEQUENCE [LARGE SCALE GENOMIC DNA]</scope>
    <source>
        <strain>HTCC1062</strain>
    </source>
</reference>
<dbReference type="EC" id="4.3.3.7" evidence="1"/>
<dbReference type="EMBL" id="CP000084">
    <property type="protein sequence ID" value="AAZ21867.1"/>
    <property type="molecule type" value="Genomic_DNA"/>
</dbReference>
<dbReference type="RefSeq" id="WP_006996864.1">
    <property type="nucleotide sequence ID" value="NC_007205.1"/>
</dbReference>
<dbReference type="SMR" id="Q4FLS1"/>
<dbReference type="STRING" id="335992.SAR11_1062"/>
<dbReference type="GeneID" id="66295552"/>
<dbReference type="KEGG" id="pub:SAR11_1062"/>
<dbReference type="eggNOG" id="COG0329">
    <property type="taxonomic scope" value="Bacteria"/>
</dbReference>
<dbReference type="HOGENOM" id="CLU_049343_7_1_5"/>
<dbReference type="OrthoDB" id="9782828at2"/>
<dbReference type="UniPathway" id="UPA00034">
    <property type="reaction ID" value="UER00017"/>
</dbReference>
<dbReference type="Proteomes" id="UP000002528">
    <property type="component" value="Chromosome"/>
</dbReference>
<dbReference type="GO" id="GO:0005829">
    <property type="term" value="C:cytosol"/>
    <property type="evidence" value="ECO:0007669"/>
    <property type="project" value="TreeGrafter"/>
</dbReference>
<dbReference type="GO" id="GO:0008840">
    <property type="term" value="F:4-hydroxy-tetrahydrodipicolinate synthase activity"/>
    <property type="evidence" value="ECO:0007669"/>
    <property type="project" value="UniProtKB-UniRule"/>
</dbReference>
<dbReference type="GO" id="GO:0019877">
    <property type="term" value="P:diaminopimelate biosynthetic process"/>
    <property type="evidence" value="ECO:0007669"/>
    <property type="project" value="UniProtKB-UniRule"/>
</dbReference>
<dbReference type="GO" id="GO:0009089">
    <property type="term" value="P:lysine biosynthetic process via diaminopimelate"/>
    <property type="evidence" value="ECO:0007669"/>
    <property type="project" value="UniProtKB-UniRule"/>
</dbReference>
<dbReference type="CDD" id="cd00950">
    <property type="entry name" value="DHDPS"/>
    <property type="match status" value="1"/>
</dbReference>
<dbReference type="Gene3D" id="3.20.20.70">
    <property type="entry name" value="Aldolase class I"/>
    <property type="match status" value="1"/>
</dbReference>
<dbReference type="HAMAP" id="MF_00418">
    <property type="entry name" value="DapA"/>
    <property type="match status" value="1"/>
</dbReference>
<dbReference type="InterPro" id="IPR013785">
    <property type="entry name" value="Aldolase_TIM"/>
</dbReference>
<dbReference type="InterPro" id="IPR005263">
    <property type="entry name" value="DapA"/>
</dbReference>
<dbReference type="InterPro" id="IPR002220">
    <property type="entry name" value="DapA-like"/>
</dbReference>
<dbReference type="InterPro" id="IPR020625">
    <property type="entry name" value="Schiff_base-form_aldolases_AS"/>
</dbReference>
<dbReference type="InterPro" id="IPR020624">
    <property type="entry name" value="Schiff_base-form_aldolases_CS"/>
</dbReference>
<dbReference type="NCBIfam" id="TIGR00674">
    <property type="entry name" value="dapA"/>
    <property type="match status" value="1"/>
</dbReference>
<dbReference type="PANTHER" id="PTHR12128:SF66">
    <property type="entry name" value="4-HYDROXY-2-OXOGLUTARATE ALDOLASE, MITOCHONDRIAL"/>
    <property type="match status" value="1"/>
</dbReference>
<dbReference type="PANTHER" id="PTHR12128">
    <property type="entry name" value="DIHYDRODIPICOLINATE SYNTHASE"/>
    <property type="match status" value="1"/>
</dbReference>
<dbReference type="Pfam" id="PF00701">
    <property type="entry name" value="DHDPS"/>
    <property type="match status" value="1"/>
</dbReference>
<dbReference type="PIRSF" id="PIRSF001365">
    <property type="entry name" value="DHDPS"/>
    <property type="match status" value="1"/>
</dbReference>
<dbReference type="PRINTS" id="PR00146">
    <property type="entry name" value="DHPICSNTHASE"/>
</dbReference>
<dbReference type="SMART" id="SM01130">
    <property type="entry name" value="DHDPS"/>
    <property type="match status" value="1"/>
</dbReference>
<dbReference type="SUPFAM" id="SSF51569">
    <property type="entry name" value="Aldolase"/>
    <property type="match status" value="1"/>
</dbReference>
<dbReference type="PROSITE" id="PS00665">
    <property type="entry name" value="DHDPS_1"/>
    <property type="match status" value="1"/>
</dbReference>
<dbReference type="PROSITE" id="PS00666">
    <property type="entry name" value="DHDPS_2"/>
    <property type="match status" value="1"/>
</dbReference>
<feature type="chain" id="PRO_1000050239" description="4-hydroxy-tetrahydrodipicolinate synthase">
    <location>
        <begin position="1"/>
        <end position="293"/>
    </location>
</feature>
<feature type="active site" description="Proton donor/acceptor" evidence="1">
    <location>
        <position position="132"/>
    </location>
</feature>
<feature type="active site" description="Schiff-base intermediate with substrate" evidence="1">
    <location>
        <position position="160"/>
    </location>
</feature>
<feature type="binding site" evidence="1">
    <location>
        <position position="44"/>
    </location>
    <ligand>
        <name>pyruvate</name>
        <dbReference type="ChEBI" id="CHEBI:15361"/>
    </ligand>
</feature>
<feature type="binding site" evidence="1">
    <location>
        <position position="202"/>
    </location>
    <ligand>
        <name>pyruvate</name>
        <dbReference type="ChEBI" id="CHEBI:15361"/>
    </ligand>
</feature>
<feature type="site" description="Part of a proton relay during catalysis" evidence="1">
    <location>
        <position position="43"/>
    </location>
</feature>
<feature type="site" description="Part of a proton relay during catalysis" evidence="1">
    <location>
        <position position="106"/>
    </location>
</feature>
<comment type="function">
    <text evidence="1">Catalyzes the condensation of (S)-aspartate-beta-semialdehyde [(S)-ASA] and pyruvate to 4-hydroxy-tetrahydrodipicolinate (HTPA).</text>
</comment>
<comment type="catalytic activity">
    <reaction evidence="1">
        <text>L-aspartate 4-semialdehyde + pyruvate = (2S,4S)-4-hydroxy-2,3,4,5-tetrahydrodipicolinate + H2O + H(+)</text>
        <dbReference type="Rhea" id="RHEA:34171"/>
        <dbReference type="ChEBI" id="CHEBI:15361"/>
        <dbReference type="ChEBI" id="CHEBI:15377"/>
        <dbReference type="ChEBI" id="CHEBI:15378"/>
        <dbReference type="ChEBI" id="CHEBI:67139"/>
        <dbReference type="ChEBI" id="CHEBI:537519"/>
        <dbReference type="EC" id="4.3.3.7"/>
    </reaction>
</comment>
<comment type="pathway">
    <text evidence="1">Amino-acid biosynthesis; L-lysine biosynthesis via DAP pathway; (S)-tetrahydrodipicolinate from L-aspartate: step 3/4.</text>
</comment>
<comment type="subunit">
    <text evidence="1">Homotetramer; dimer of dimers.</text>
</comment>
<comment type="subcellular location">
    <subcellularLocation>
        <location evidence="1">Cytoplasm</location>
    </subcellularLocation>
</comment>
<comment type="similarity">
    <text evidence="1">Belongs to the DapA family.</text>
</comment>
<comment type="caution">
    <text evidence="2">Was originally thought to be a dihydrodipicolinate synthase (DHDPS), catalyzing the condensation of (S)-aspartate-beta-semialdehyde [(S)-ASA] and pyruvate to dihydrodipicolinate (DHDP). However, it was shown in E.coli that the product of the enzymatic reaction is not dihydrodipicolinate but in fact (4S)-4-hydroxy-2,3,4,5-tetrahydro-(2S)-dipicolinic acid (HTPA), and that the consecutive dehydration reaction leading to DHDP is not spontaneous but catalyzed by DapB.</text>
</comment>
<organism>
    <name type="scientific">Pelagibacter ubique (strain HTCC1062)</name>
    <dbReference type="NCBI Taxonomy" id="335992"/>
    <lineage>
        <taxon>Bacteria</taxon>
        <taxon>Pseudomonadati</taxon>
        <taxon>Pseudomonadota</taxon>
        <taxon>Alphaproteobacteria</taxon>
        <taxon>Candidatus Pelagibacterales</taxon>
        <taxon>Candidatus Pelagibacteraceae</taxon>
        <taxon>Candidatus Pelagibacter</taxon>
    </lineage>
</organism>
<proteinExistence type="inferred from homology"/>